<evidence type="ECO:0000255" key="1"/>
<evidence type="ECO:0000255" key="2">
    <source>
        <dbReference type="PROSITE-ProRule" id="PRU00521"/>
    </source>
</evidence>
<evidence type="ECO:0000305" key="3"/>
<feature type="chain" id="PRO_0000070231" description="Putative G-protein coupled receptor B0244.7">
    <location>
        <begin position="1"/>
        <end position="319"/>
    </location>
</feature>
<feature type="transmembrane region" description="Helical" evidence="1">
    <location>
        <begin position="49"/>
        <end position="69"/>
    </location>
</feature>
<feature type="transmembrane region" description="Helical" evidence="1">
    <location>
        <begin position="107"/>
        <end position="127"/>
    </location>
</feature>
<feature type="transmembrane region" description="Helical" evidence="1">
    <location>
        <begin position="131"/>
        <end position="151"/>
    </location>
</feature>
<feature type="transmembrane region" description="Helical" evidence="1">
    <location>
        <begin position="166"/>
        <end position="186"/>
    </location>
</feature>
<feature type="transmembrane region" description="Helical" evidence="1">
    <location>
        <begin position="206"/>
        <end position="226"/>
    </location>
</feature>
<feature type="transmembrane region" description="Helical" evidence="1">
    <location>
        <begin position="261"/>
        <end position="281"/>
    </location>
</feature>
<feature type="glycosylation site" description="N-linked (GlcNAc...) asparagine" evidence="1">
    <location>
        <position position="28"/>
    </location>
</feature>
<protein>
    <recommendedName>
        <fullName>Putative G-protein coupled receptor B0244.7</fullName>
    </recommendedName>
</protein>
<sequence length="319" mass="35783">MLIPSPDPFASCPGYYLPDFEPFKACTNISNFCNHARDVYNIEMLLRWAIFIIPCCMSFFALFLNIYIFYVLIPNLRKMNGRSKKKYIFILSRAVSASMSILAIFLLPVIIFLTHFNFWVIALFIIFEMLSFLSFIGGMVGTTLTIYIAVVHPMYYQRELSLRKCVLLILLLWVSAITVAISCGIVEAAFIGRNSPFSCDYGNCAGPVLIFGIVCIATAFSICLVIQLYVIISLWKLGIQSTKRGDYSSTSKALTGVKRKLFAGFFVFATMAIFEIASAIILVRSVSEQTQDLDACDKLSASTSRLQFVISCVVLTLLW</sequence>
<dbReference type="EMBL" id="FO080136">
    <property type="protein sequence ID" value="CCD61502.1"/>
    <property type="molecule type" value="Genomic_DNA"/>
</dbReference>
<dbReference type="RefSeq" id="NP_498239.1">
    <property type="nucleotide sequence ID" value="NM_065838.1"/>
</dbReference>
<dbReference type="SMR" id="Q09966"/>
<dbReference type="FunCoup" id="Q09966">
    <property type="interactions" value="39"/>
</dbReference>
<dbReference type="PaxDb" id="6239-B0244.7"/>
<dbReference type="EnsemblMetazoa" id="B0244.7.1">
    <property type="protein sequence ID" value="B0244.7.1"/>
    <property type="gene ID" value="WBGene00015082"/>
</dbReference>
<dbReference type="UCSC" id="B0244.7">
    <property type="organism name" value="c. elegans"/>
</dbReference>
<dbReference type="AGR" id="WB:WBGene00015082"/>
<dbReference type="WormBase" id="B0244.7">
    <property type="protein sequence ID" value="CE52007"/>
    <property type="gene ID" value="WBGene00015082"/>
</dbReference>
<dbReference type="eggNOG" id="ENOG502TFI9">
    <property type="taxonomic scope" value="Eukaryota"/>
</dbReference>
<dbReference type="GeneTree" id="ENSGT00970000195911"/>
<dbReference type="HOGENOM" id="CLU_062089_0_0_1"/>
<dbReference type="InParanoid" id="Q09966"/>
<dbReference type="OMA" id="WRHERKS"/>
<dbReference type="PhylomeDB" id="Q09966"/>
<dbReference type="PRO" id="PR:Q09966"/>
<dbReference type="Proteomes" id="UP000001940">
    <property type="component" value="Chromosome III"/>
</dbReference>
<dbReference type="Bgee" id="WBGene00015082">
    <property type="expression patterns" value="Expressed in larva and 2 other cell types or tissues"/>
</dbReference>
<dbReference type="GO" id="GO:0005886">
    <property type="term" value="C:plasma membrane"/>
    <property type="evidence" value="ECO:0007669"/>
    <property type="project" value="UniProtKB-SubCell"/>
</dbReference>
<dbReference type="GO" id="GO:0004930">
    <property type="term" value="F:G protein-coupled receptor activity"/>
    <property type="evidence" value="ECO:0007669"/>
    <property type="project" value="UniProtKB-KW"/>
</dbReference>
<dbReference type="Gene3D" id="1.20.1070.10">
    <property type="entry name" value="Rhodopsin 7-helix transmembrane proteins"/>
    <property type="match status" value="1"/>
</dbReference>
<dbReference type="InterPro" id="IPR017452">
    <property type="entry name" value="GPCR_Rhodpsn_7TM"/>
</dbReference>
<dbReference type="InterPro" id="IPR040435">
    <property type="entry name" value="Put_GPCR_Chromadorea"/>
</dbReference>
<dbReference type="PANTHER" id="PTHR37441:SF3">
    <property type="entry name" value="G-PROTEIN COUPLED RECEPTOR B0244.7-RELATED"/>
    <property type="match status" value="1"/>
</dbReference>
<dbReference type="PANTHER" id="PTHR37441">
    <property type="entry name" value="PROTEIN CBG16518"/>
    <property type="match status" value="1"/>
</dbReference>
<dbReference type="SUPFAM" id="SSF81321">
    <property type="entry name" value="Family A G protein-coupled receptor-like"/>
    <property type="match status" value="1"/>
</dbReference>
<dbReference type="PROSITE" id="PS50262">
    <property type="entry name" value="G_PROTEIN_RECEP_F1_2"/>
    <property type="match status" value="1"/>
</dbReference>
<proteinExistence type="inferred from homology"/>
<reference key="1">
    <citation type="journal article" date="1998" name="Science">
        <title>Genome sequence of the nematode C. elegans: a platform for investigating biology.</title>
        <authorList>
            <consortium name="The C. elegans sequencing consortium"/>
        </authorList>
    </citation>
    <scope>NUCLEOTIDE SEQUENCE [LARGE SCALE GENOMIC DNA]</scope>
    <source>
        <strain>Bristol N2</strain>
    </source>
</reference>
<organism>
    <name type="scientific">Caenorhabditis elegans</name>
    <dbReference type="NCBI Taxonomy" id="6239"/>
    <lineage>
        <taxon>Eukaryota</taxon>
        <taxon>Metazoa</taxon>
        <taxon>Ecdysozoa</taxon>
        <taxon>Nematoda</taxon>
        <taxon>Chromadorea</taxon>
        <taxon>Rhabditida</taxon>
        <taxon>Rhabditina</taxon>
        <taxon>Rhabditomorpha</taxon>
        <taxon>Rhabditoidea</taxon>
        <taxon>Rhabditidae</taxon>
        <taxon>Peloderinae</taxon>
        <taxon>Caenorhabditis</taxon>
    </lineage>
</organism>
<gene>
    <name type="ORF">B0244.7</name>
</gene>
<comment type="subcellular location">
    <subcellularLocation>
        <location evidence="3">Cell membrane</location>
        <topology evidence="3">Multi-pass membrane protein</topology>
    </subcellularLocation>
</comment>
<comment type="similarity">
    <text evidence="2">Belongs to the G-protein coupled receptor 1 family. B0244 subfamily.</text>
</comment>
<name>YS97_CAEEL</name>
<keyword id="KW-1003">Cell membrane</keyword>
<keyword id="KW-0297">G-protein coupled receptor</keyword>
<keyword id="KW-0325">Glycoprotein</keyword>
<keyword id="KW-0472">Membrane</keyword>
<keyword id="KW-0675">Receptor</keyword>
<keyword id="KW-1185">Reference proteome</keyword>
<keyword id="KW-0807">Transducer</keyword>
<keyword id="KW-0812">Transmembrane</keyword>
<keyword id="KW-1133">Transmembrane helix</keyword>
<accession>Q09966</accession>